<accession>Q0BKX8</accession>
<feature type="chain" id="PRO_1000135900" description="2,3-bisphosphoglycerate-independent phosphoglycerate mutase">
    <location>
        <begin position="1"/>
        <end position="516"/>
    </location>
</feature>
<feature type="active site" description="Phosphoserine intermediate" evidence="1">
    <location>
        <position position="65"/>
    </location>
</feature>
<feature type="binding site" evidence="1">
    <location>
        <position position="15"/>
    </location>
    <ligand>
        <name>Mn(2+)</name>
        <dbReference type="ChEBI" id="CHEBI:29035"/>
        <label>2</label>
    </ligand>
</feature>
<feature type="binding site" evidence="1">
    <location>
        <position position="65"/>
    </location>
    <ligand>
        <name>Mn(2+)</name>
        <dbReference type="ChEBI" id="CHEBI:29035"/>
        <label>2</label>
    </ligand>
</feature>
<feature type="binding site" evidence="1">
    <location>
        <position position="126"/>
    </location>
    <ligand>
        <name>substrate</name>
    </ligand>
</feature>
<feature type="binding site" evidence="1">
    <location>
        <begin position="156"/>
        <end position="157"/>
    </location>
    <ligand>
        <name>substrate</name>
    </ligand>
</feature>
<feature type="binding site" evidence="1">
    <location>
        <position position="188"/>
    </location>
    <ligand>
        <name>substrate</name>
    </ligand>
</feature>
<feature type="binding site" evidence="1">
    <location>
        <position position="194"/>
    </location>
    <ligand>
        <name>substrate</name>
    </ligand>
</feature>
<feature type="binding site" evidence="1">
    <location>
        <begin position="263"/>
        <end position="266"/>
    </location>
    <ligand>
        <name>substrate</name>
    </ligand>
</feature>
<feature type="binding site" evidence="1">
    <location>
        <position position="336"/>
    </location>
    <ligand>
        <name>substrate</name>
    </ligand>
</feature>
<feature type="binding site" evidence="1">
    <location>
        <position position="403"/>
    </location>
    <ligand>
        <name>Mn(2+)</name>
        <dbReference type="ChEBI" id="CHEBI:29035"/>
        <label>1</label>
    </ligand>
</feature>
<feature type="binding site" evidence="1">
    <location>
        <position position="407"/>
    </location>
    <ligand>
        <name>Mn(2+)</name>
        <dbReference type="ChEBI" id="CHEBI:29035"/>
        <label>1</label>
    </ligand>
</feature>
<feature type="binding site" evidence="1">
    <location>
        <position position="444"/>
    </location>
    <ligand>
        <name>Mn(2+)</name>
        <dbReference type="ChEBI" id="CHEBI:29035"/>
        <label>2</label>
    </ligand>
</feature>
<feature type="binding site" evidence="1">
    <location>
        <position position="445"/>
    </location>
    <ligand>
        <name>Mn(2+)</name>
        <dbReference type="ChEBI" id="CHEBI:29035"/>
        <label>2</label>
    </ligand>
</feature>
<feature type="binding site" evidence="1">
    <location>
        <position position="463"/>
    </location>
    <ligand>
        <name>Mn(2+)</name>
        <dbReference type="ChEBI" id="CHEBI:29035"/>
        <label>1</label>
    </ligand>
</feature>
<keyword id="KW-0324">Glycolysis</keyword>
<keyword id="KW-0413">Isomerase</keyword>
<keyword id="KW-0464">Manganese</keyword>
<keyword id="KW-0479">Metal-binding</keyword>
<sequence>MRIIMKKTTLLVILDGWGYSDSDYFNAIKNANTPTWDSIWQEFPKTLINASSLEVGLPRSQMGNSEVGHVNIGCGRVVYQELTKIDKAIEEKTFGDNKAICAAIDNVIKNDSNLHLIGLLSPGGVHSHEEHIFEMIKIAKQKGIKRLYLHAFLDGRDTPPRSAEKSIKKADKLLQDLNLGYIASVCGRYYAMDRDNRWDRVEKAYNAIVNANADFIYDSALEALEQSYARDQSDEFVIPTCIKKDGHLVKVQDNDSVIFMNFRADRAREISHAFTDESFDHFPRKKHLNINFTTLTEYDSKLKCAVAFPPEQPINTLGEVLMKNHKTQLRIAETEKYPHVTFFFNGGREEQFEGEDRILIPSPKVATYDLQPEMSAPEVTDKLVAAINSGKYDCIVCNYANSDMVGHTGNYEAAMQAIEYLDKCIARLKDAILEHDGNMFITADHGNADMMVNPETQKPHTAHTTNLVPFIYVGHKKAQVALEHGKLSDIAPTLLNVMGIAQPKEMTGKTIFNFEK</sequence>
<reference key="1">
    <citation type="journal article" date="2006" name="J. Bacteriol.">
        <title>Chromosome rearrangement and diversification of Francisella tularensis revealed by the type B (OSU18) genome sequence.</title>
        <authorList>
            <person name="Petrosino J.F."/>
            <person name="Xiang Q."/>
            <person name="Karpathy S.E."/>
            <person name="Jiang H."/>
            <person name="Yerrapragada S."/>
            <person name="Liu Y."/>
            <person name="Gioia J."/>
            <person name="Hemphill L."/>
            <person name="Gonzalez A."/>
            <person name="Raghavan T.M."/>
            <person name="Uzman A."/>
            <person name="Fox G.E."/>
            <person name="Highlander S."/>
            <person name="Reichard M."/>
            <person name="Morton R.J."/>
            <person name="Clinkenbeard K.D."/>
            <person name="Weinstock G.M."/>
        </authorList>
    </citation>
    <scope>NUCLEOTIDE SEQUENCE [LARGE SCALE GENOMIC DNA]</scope>
    <source>
        <strain>OSU18</strain>
    </source>
</reference>
<organism>
    <name type="scientific">Francisella tularensis subsp. holarctica (strain OSU18)</name>
    <dbReference type="NCBI Taxonomy" id="393011"/>
    <lineage>
        <taxon>Bacteria</taxon>
        <taxon>Pseudomonadati</taxon>
        <taxon>Pseudomonadota</taxon>
        <taxon>Gammaproteobacteria</taxon>
        <taxon>Thiotrichales</taxon>
        <taxon>Francisellaceae</taxon>
        <taxon>Francisella</taxon>
    </lineage>
</organism>
<comment type="function">
    <text evidence="1">Catalyzes the interconversion of 2-phosphoglycerate and 3-phosphoglycerate.</text>
</comment>
<comment type="catalytic activity">
    <reaction evidence="1">
        <text>(2R)-2-phosphoglycerate = (2R)-3-phosphoglycerate</text>
        <dbReference type="Rhea" id="RHEA:15901"/>
        <dbReference type="ChEBI" id="CHEBI:58272"/>
        <dbReference type="ChEBI" id="CHEBI:58289"/>
        <dbReference type="EC" id="5.4.2.12"/>
    </reaction>
</comment>
<comment type="cofactor">
    <cofactor evidence="1">
        <name>Mn(2+)</name>
        <dbReference type="ChEBI" id="CHEBI:29035"/>
    </cofactor>
    <text evidence="1">Binds 2 manganese ions per subunit.</text>
</comment>
<comment type="pathway">
    <text evidence="1">Carbohydrate degradation; glycolysis; pyruvate from D-glyceraldehyde 3-phosphate: step 3/5.</text>
</comment>
<comment type="subunit">
    <text evidence="1">Monomer.</text>
</comment>
<comment type="similarity">
    <text evidence="1">Belongs to the BPG-independent phosphoglycerate mutase family.</text>
</comment>
<protein>
    <recommendedName>
        <fullName evidence="1">2,3-bisphosphoglycerate-independent phosphoglycerate mutase</fullName>
        <shortName evidence="1">BPG-independent PGAM</shortName>
        <shortName evidence="1">Phosphoglyceromutase</shortName>
        <shortName evidence="1">iPGM</shortName>
        <ecNumber evidence="1">5.4.2.12</ecNumber>
    </recommendedName>
</protein>
<dbReference type="EC" id="5.4.2.12" evidence="1"/>
<dbReference type="EMBL" id="CP000437">
    <property type="protein sequence ID" value="ABI83256.1"/>
    <property type="molecule type" value="Genomic_DNA"/>
</dbReference>
<dbReference type="SMR" id="Q0BKX8"/>
<dbReference type="KEGG" id="fth:FTH_1444"/>
<dbReference type="UniPathway" id="UPA00109">
    <property type="reaction ID" value="UER00186"/>
</dbReference>
<dbReference type="GO" id="GO:0005829">
    <property type="term" value="C:cytosol"/>
    <property type="evidence" value="ECO:0007669"/>
    <property type="project" value="TreeGrafter"/>
</dbReference>
<dbReference type="GO" id="GO:0030145">
    <property type="term" value="F:manganese ion binding"/>
    <property type="evidence" value="ECO:0007669"/>
    <property type="project" value="UniProtKB-UniRule"/>
</dbReference>
<dbReference type="GO" id="GO:0004619">
    <property type="term" value="F:phosphoglycerate mutase activity"/>
    <property type="evidence" value="ECO:0007669"/>
    <property type="project" value="UniProtKB-EC"/>
</dbReference>
<dbReference type="GO" id="GO:0006007">
    <property type="term" value="P:glucose catabolic process"/>
    <property type="evidence" value="ECO:0007669"/>
    <property type="project" value="InterPro"/>
</dbReference>
<dbReference type="GO" id="GO:0006096">
    <property type="term" value="P:glycolytic process"/>
    <property type="evidence" value="ECO:0007669"/>
    <property type="project" value="UniProtKB-UniRule"/>
</dbReference>
<dbReference type="CDD" id="cd16010">
    <property type="entry name" value="iPGM"/>
    <property type="match status" value="1"/>
</dbReference>
<dbReference type="FunFam" id="3.40.1450.10:FF:000001">
    <property type="entry name" value="2,3-bisphosphoglycerate-independent phosphoglycerate mutase"/>
    <property type="match status" value="1"/>
</dbReference>
<dbReference type="FunFam" id="3.40.720.10:FF:000001">
    <property type="entry name" value="2,3-bisphosphoglycerate-independent phosphoglycerate mutase"/>
    <property type="match status" value="1"/>
</dbReference>
<dbReference type="Gene3D" id="3.40.720.10">
    <property type="entry name" value="Alkaline Phosphatase, subunit A"/>
    <property type="match status" value="1"/>
</dbReference>
<dbReference type="Gene3D" id="3.40.1450.10">
    <property type="entry name" value="BPG-independent phosphoglycerate mutase, domain B"/>
    <property type="match status" value="1"/>
</dbReference>
<dbReference type="HAMAP" id="MF_01038">
    <property type="entry name" value="GpmI"/>
    <property type="match status" value="1"/>
</dbReference>
<dbReference type="InterPro" id="IPR017850">
    <property type="entry name" value="Alkaline_phosphatase_core_sf"/>
</dbReference>
<dbReference type="InterPro" id="IPR011258">
    <property type="entry name" value="BPG-indep_PGM_N"/>
</dbReference>
<dbReference type="InterPro" id="IPR006124">
    <property type="entry name" value="Metalloenzyme"/>
</dbReference>
<dbReference type="InterPro" id="IPR036646">
    <property type="entry name" value="PGAM_B_sf"/>
</dbReference>
<dbReference type="InterPro" id="IPR005995">
    <property type="entry name" value="Pgm_bpd_ind"/>
</dbReference>
<dbReference type="NCBIfam" id="TIGR01307">
    <property type="entry name" value="pgm_bpd_ind"/>
    <property type="match status" value="1"/>
</dbReference>
<dbReference type="PANTHER" id="PTHR31637">
    <property type="entry name" value="2,3-BISPHOSPHOGLYCERATE-INDEPENDENT PHOSPHOGLYCERATE MUTASE"/>
    <property type="match status" value="1"/>
</dbReference>
<dbReference type="PANTHER" id="PTHR31637:SF0">
    <property type="entry name" value="2,3-BISPHOSPHOGLYCERATE-INDEPENDENT PHOSPHOGLYCERATE MUTASE"/>
    <property type="match status" value="1"/>
</dbReference>
<dbReference type="Pfam" id="PF06415">
    <property type="entry name" value="iPGM_N"/>
    <property type="match status" value="1"/>
</dbReference>
<dbReference type="Pfam" id="PF01676">
    <property type="entry name" value="Metalloenzyme"/>
    <property type="match status" value="1"/>
</dbReference>
<dbReference type="PIRSF" id="PIRSF001492">
    <property type="entry name" value="IPGAM"/>
    <property type="match status" value="1"/>
</dbReference>
<dbReference type="SUPFAM" id="SSF64158">
    <property type="entry name" value="2,3-Bisphosphoglycerate-independent phosphoglycerate mutase, substrate-binding domain"/>
    <property type="match status" value="1"/>
</dbReference>
<dbReference type="SUPFAM" id="SSF53649">
    <property type="entry name" value="Alkaline phosphatase-like"/>
    <property type="match status" value="1"/>
</dbReference>
<name>GPMI_FRATO</name>
<evidence type="ECO:0000255" key="1">
    <source>
        <dbReference type="HAMAP-Rule" id="MF_01038"/>
    </source>
</evidence>
<gene>
    <name evidence="1" type="primary">gpmI</name>
    <name type="ordered locus">FTH_1444</name>
</gene>
<proteinExistence type="inferred from homology"/>